<evidence type="ECO:0000255" key="1">
    <source>
        <dbReference type="HAMAP-Rule" id="MF_01337"/>
    </source>
</evidence>
<evidence type="ECO:0000305" key="2"/>
<organism>
    <name type="scientific">Shewanella woodyi (strain ATCC 51908 / MS32)</name>
    <dbReference type="NCBI Taxonomy" id="392500"/>
    <lineage>
        <taxon>Bacteria</taxon>
        <taxon>Pseudomonadati</taxon>
        <taxon>Pseudomonadota</taxon>
        <taxon>Gammaproteobacteria</taxon>
        <taxon>Alteromonadales</taxon>
        <taxon>Shewanellaceae</taxon>
        <taxon>Shewanella</taxon>
    </lineage>
</organism>
<feature type="chain" id="PRO_1000142720" description="Large ribosomal subunit protein uL18">
    <location>
        <begin position="1"/>
        <end position="116"/>
    </location>
</feature>
<comment type="function">
    <text evidence="1">This is one of the proteins that bind and probably mediate the attachment of the 5S RNA into the large ribosomal subunit, where it forms part of the central protuberance.</text>
</comment>
<comment type="subunit">
    <text evidence="1">Part of the 50S ribosomal subunit; part of the 5S rRNA/L5/L18/L25 subcomplex. Contacts the 5S and 23S rRNAs.</text>
</comment>
<comment type="similarity">
    <text evidence="1">Belongs to the universal ribosomal protein uL18 family.</text>
</comment>
<proteinExistence type="inferred from homology"/>
<protein>
    <recommendedName>
        <fullName evidence="1">Large ribosomal subunit protein uL18</fullName>
    </recommendedName>
    <alternativeName>
        <fullName evidence="2">50S ribosomal protein L18</fullName>
    </alternativeName>
</protein>
<reference key="1">
    <citation type="submission" date="2008-02" db="EMBL/GenBank/DDBJ databases">
        <title>Complete sequence of Shewanella woodyi ATCC 51908.</title>
        <authorList>
            <consortium name="US DOE Joint Genome Institute"/>
            <person name="Copeland A."/>
            <person name="Lucas S."/>
            <person name="Lapidus A."/>
            <person name="Glavina del Rio T."/>
            <person name="Dalin E."/>
            <person name="Tice H."/>
            <person name="Bruce D."/>
            <person name="Goodwin L."/>
            <person name="Pitluck S."/>
            <person name="Sims D."/>
            <person name="Brettin T."/>
            <person name="Detter J.C."/>
            <person name="Han C."/>
            <person name="Kuske C.R."/>
            <person name="Schmutz J."/>
            <person name="Larimer F."/>
            <person name="Land M."/>
            <person name="Hauser L."/>
            <person name="Kyrpides N."/>
            <person name="Lykidis A."/>
            <person name="Zhao J.-S."/>
            <person name="Richardson P."/>
        </authorList>
    </citation>
    <scope>NUCLEOTIDE SEQUENCE [LARGE SCALE GENOMIC DNA]</scope>
    <source>
        <strain>ATCC 51908 / MS32</strain>
    </source>
</reference>
<name>RL18_SHEWM</name>
<accession>B1KMW7</accession>
<gene>
    <name evidence="1" type="primary">rplR</name>
    <name type="ordered locus">Swoo_4674</name>
</gene>
<sequence length="116" mass="12690">MDKKTSRLRRALRGRKKIQELGVNRLVVHRTPRHTYAQVISPDSQVLASASTAEKAVTEQLKYTGNVDAAKVVGKTVAERAIEKGVTVVAFDRSGFKYHGRVAALADAAREAGLKF</sequence>
<keyword id="KW-1185">Reference proteome</keyword>
<keyword id="KW-0687">Ribonucleoprotein</keyword>
<keyword id="KW-0689">Ribosomal protein</keyword>
<keyword id="KW-0694">RNA-binding</keyword>
<keyword id="KW-0699">rRNA-binding</keyword>
<dbReference type="EMBL" id="CP000961">
    <property type="protein sequence ID" value="ACA88924.1"/>
    <property type="molecule type" value="Genomic_DNA"/>
</dbReference>
<dbReference type="RefSeq" id="WP_012327247.1">
    <property type="nucleotide sequence ID" value="NC_010506.1"/>
</dbReference>
<dbReference type="SMR" id="B1KMW7"/>
<dbReference type="STRING" id="392500.Swoo_4674"/>
<dbReference type="KEGG" id="swd:Swoo_4674"/>
<dbReference type="eggNOG" id="COG0256">
    <property type="taxonomic scope" value="Bacteria"/>
</dbReference>
<dbReference type="HOGENOM" id="CLU_098841_0_1_6"/>
<dbReference type="Proteomes" id="UP000002168">
    <property type="component" value="Chromosome"/>
</dbReference>
<dbReference type="GO" id="GO:0022625">
    <property type="term" value="C:cytosolic large ribosomal subunit"/>
    <property type="evidence" value="ECO:0007669"/>
    <property type="project" value="TreeGrafter"/>
</dbReference>
<dbReference type="GO" id="GO:0008097">
    <property type="term" value="F:5S rRNA binding"/>
    <property type="evidence" value="ECO:0007669"/>
    <property type="project" value="TreeGrafter"/>
</dbReference>
<dbReference type="GO" id="GO:0003735">
    <property type="term" value="F:structural constituent of ribosome"/>
    <property type="evidence" value="ECO:0007669"/>
    <property type="project" value="InterPro"/>
</dbReference>
<dbReference type="GO" id="GO:0006412">
    <property type="term" value="P:translation"/>
    <property type="evidence" value="ECO:0007669"/>
    <property type="project" value="UniProtKB-UniRule"/>
</dbReference>
<dbReference type="CDD" id="cd00432">
    <property type="entry name" value="Ribosomal_L18_L5e"/>
    <property type="match status" value="1"/>
</dbReference>
<dbReference type="FunFam" id="3.30.420.100:FF:000001">
    <property type="entry name" value="50S ribosomal protein L18"/>
    <property type="match status" value="1"/>
</dbReference>
<dbReference type="Gene3D" id="3.30.420.100">
    <property type="match status" value="1"/>
</dbReference>
<dbReference type="HAMAP" id="MF_01337_B">
    <property type="entry name" value="Ribosomal_uL18_B"/>
    <property type="match status" value="1"/>
</dbReference>
<dbReference type="InterPro" id="IPR004389">
    <property type="entry name" value="Ribosomal_uL18_bac-type"/>
</dbReference>
<dbReference type="InterPro" id="IPR005484">
    <property type="entry name" value="Ribosomal_uL18_bac/euk"/>
</dbReference>
<dbReference type="NCBIfam" id="TIGR00060">
    <property type="entry name" value="L18_bact"/>
    <property type="match status" value="1"/>
</dbReference>
<dbReference type="PANTHER" id="PTHR12899">
    <property type="entry name" value="39S RIBOSOMAL PROTEIN L18, MITOCHONDRIAL"/>
    <property type="match status" value="1"/>
</dbReference>
<dbReference type="PANTHER" id="PTHR12899:SF3">
    <property type="entry name" value="LARGE RIBOSOMAL SUBUNIT PROTEIN UL18M"/>
    <property type="match status" value="1"/>
</dbReference>
<dbReference type="Pfam" id="PF00861">
    <property type="entry name" value="Ribosomal_L18p"/>
    <property type="match status" value="1"/>
</dbReference>
<dbReference type="SUPFAM" id="SSF53137">
    <property type="entry name" value="Translational machinery components"/>
    <property type="match status" value="1"/>
</dbReference>